<sequence length="357" mass="37798">MAERSSEFVFTGNPARVIFGAGRMRNVREEVERLGRGRVLLLGSENLREVCDQVQDLLGELFVNRYDGAAMHTPVEVTDIALAQLRTSEADCVVAIGGGSTTGLAKALAARTGVDQVILPTTYAGSEVTPVLGETVEGRKTTRSTLAVLPETVIYDVELSKNLPVPIAVASAVNALAHAVEAMYSPDANPVVDTWALEAAQALARGLRGLVSDPSCRRIRTDLLRGSWLAGMCLGSVGMAVHHKLCHTLGGAFGLPHAPTHTVVLPYAMSFNASEVPDVMDSLASAMNVSNAPAGVWDLIADAGGPTSLASLGLLQTDLDRAADLATEAPYRNPRQITRSGIRDLLQSAWEGNRPPE</sequence>
<protein>
    <recommendedName>
        <fullName>Maleylacetate reductase 1</fullName>
        <ecNumber>1.3.1.32</ecNumber>
    </recommendedName>
    <alternativeName>
        <fullName>Maleylacetate reductase I</fullName>
    </alternativeName>
</protein>
<gene>
    <name type="primary">macA</name>
</gene>
<organism>
    <name type="scientific">Rhodococcus opacus</name>
    <name type="common">Nocardia opaca</name>
    <dbReference type="NCBI Taxonomy" id="37919"/>
    <lineage>
        <taxon>Bacteria</taxon>
        <taxon>Bacillati</taxon>
        <taxon>Actinomycetota</taxon>
        <taxon>Actinomycetes</taxon>
        <taxon>Mycobacteriales</taxon>
        <taxon>Nocardiaceae</taxon>
        <taxon>Rhodococcus</taxon>
    </lineage>
</organism>
<proteinExistence type="inferred from homology"/>
<feature type="chain" id="PRO_0000087847" description="Maleylacetate reductase 1">
    <location>
        <begin position="1"/>
        <end position="357"/>
    </location>
</feature>
<comment type="function">
    <text>Plays a major role in the degradation of chloroaromatic compounds by channeling maleylacetate and some of its substituted derivatives into the 3-oxoadipate pathway. This enzyme converts maleylacetate and 2-chloromaleylacetate with similar efficiencies.</text>
</comment>
<comment type="catalytic activity">
    <reaction>
        <text>3-oxoadipate + NAD(+) = maleylacetate + NADH + H(+)</text>
        <dbReference type="Rhea" id="RHEA:16981"/>
        <dbReference type="ChEBI" id="CHEBI:15378"/>
        <dbReference type="ChEBI" id="CHEBI:15775"/>
        <dbReference type="ChEBI" id="CHEBI:16468"/>
        <dbReference type="ChEBI" id="CHEBI:57540"/>
        <dbReference type="ChEBI" id="CHEBI:57945"/>
        <dbReference type="EC" id="1.3.1.32"/>
    </reaction>
</comment>
<comment type="catalytic activity">
    <reaction>
        <text>3-oxoadipate + NADP(+) = maleylacetate + NADPH + H(+)</text>
        <dbReference type="Rhea" id="RHEA:16985"/>
        <dbReference type="ChEBI" id="CHEBI:15378"/>
        <dbReference type="ChEBI" id="CHEBI:15775"/>
        <dbReference type="ChEBI" id="CHEBI:16468"/>
        <dbReference type="ChEBI" id="CHEBI:57783"/>
        <dbReference type="ChEBI" id="CHEBI:58349"/>
        <dbReference type="EC" id="1.3.1.32"/>
    </reaction>
</comment>
<comment type="pathway">
    <text>Aromatic compound metabolism; 3-chlorocatechol degradation.</text>
</comment>
<comment type="similarity">
    <text evidence="1">Belongs to the iron-containing alcohol dehydrogenase family.</text>
</comment>
<keyword id="KW-0058">Aromatic hydrocarbons catabolism</keyword>
<keyword id="KW-0520">NAD</keyword>
<keyword id="KW-0560">Oxidoreductase</keyword>
<evidence type="ECO:0000305" key="1"/>
<name>MACA1_RHOOP</name>
<reference key="1">
    <citation type="journal article" date="1998" name="J. Bacteriol.">
        <title>Characterization of the maleylacetate reductase MacA of Rhodococcus opacus 1CP and evidence for the presence of an isofunctional enzyme.</title>
        <authorList>
            <person name="Seibert V."/>
            <person name="Kourbatova E.M."/>
            <person name="Golovleva L.A."/>
            <person name="Schloemann M."/>
        </authorList>
    </citation>
    <scope>NUCLEOTIDE SEQUENCE [GENOMIC DNA]</scope>
    <source>
        <strain>1CP</strain>
    </source>
</reference>
<accession>O84992</accession>
<dbReference type="EC" id="1.3.1.32"/>
<dbReference type="EMBL" id="AF030176">
    <property type="protein sequence ID" value="AAC38802.1"/>
    <property type="molecule type" value="Genomic_DNA"/>
</dbReference>
<dbReference type="RefSeq" id="WP_081315596.1">
    <property type="nucleotide sequence ID" value="NZ_CP009112.1"/>
</dbReference>
<dbReference type="SMR" id="O84992"/>
<dbReference type="BioCyc" id="MetaCyc:MONOMER-13024"/>
<dbReference type="UniPathway" id="UPA00083"/>
<dbReference type="GO" id="GO:0004022">
    <property type="term" value="F:alcohol dehydrogenase (NAD+) activity"/>
    <property type="evidence" value="ECO:0007669"/>
    <property type="project" value="TreeGrafter"/>
</dbReference>
<dbReference type="GO" id="GO:0018506">
    <property type="term" value="F:maleylacetate reductase activity"/>
    <property type="evidence" value="ECO:0007669"/>
    <property type="project" value="UniProtKB-EC"/>
</dbReference>
<dbReference type="GO" id="GO:0046872">
    <property type="term" value="F:metal ion binding"/>
    <property type="evidence" value="ECO:0007669"/>
    <property type="project" value="InterPro"/>
</dbReference>
<dbReference type="GO" id="GO:0009056">
    <property type="term" value="P:catabolic process"/>
    <property type="evidence" value="ECO:0007669"/>
    <property type="project" value="UniProtKB-KW"/>
</dbReference>
<dbReference type="CDD" id="cd08177">
    <property type="entry name" value="MAR"/>
    <property type="match status" value="1"/>
</dbReference>
<dbReference type="Gene3D" id="3.40.50.1970">
    <property type="match status" value="1"/>
</dbReference>
<dbReference type="Gene3D" id="1.20.1090.10">
    <property type="entry name" value="Dehydroquinate synthase-like - alpha domain"/>
    <property type="match status" value="1"/>
</dbReference>
<dbReference type="InterPro" id="IPR001670">
    <property type="entry name" value="ADH_Fe/GldA"/>
</dbReference>
<dbReference type="InterPro" id="IPR056798">
    <property type="entry name" value="ADH_Fe_C"/>
</dbReference>
<dbReference type="InterPro" id="IPR039697">
    <property type="entry name" value="Alcohol_dehydrogenase_Fe"/>
</dbReference>
<dbReference type="InterPro" id="IPR034786">
    <property type="entry name" value="MAR"/>
</dbReference>
<dbReference type="PANTHER" id="PTHR11496">
    <property type="entry name" value="ALCOHOL DEHYDROGENASE"/>
    <property type="match status" value="1"/>
</dbReference>
<dbReference type="PANTHER" id="PTHR11496:SF102">
    <property type="entry name" value="ALCOHOL DEHYDROGENASE 4"/>
    <property type="match status" value="1"/>
</dbReference>
<dbReference type="Pfam" id="PF25137">
    <property type="entry name" value="ADH_Fe_C"/>
    <property type="match status" value="1"/>
</dbReference>
<dbReference type="Pfam" id="PF00465">
    <property type="entry name" value="Fe-ADH"/>
    <property type="match status" value="1"/>
</dbReference>
<dbReference type="SUPFAM" id="SSF56796">
    <property type="entry name" value="Dehydroquinate synthase-like"/>
    <property type="match status" value="1"/>
</dbReference>